<reference key="1">
    <citation type="journal article" date="1994" name="J. Biol. Chem.">
        <title>Identification of a novel growth factor-responsive gene in vascular smooth muscle cells.</title>
        <authorList>
            <person name="Wax S.D."/>
            <person name="Rosenfield C.L."/>
            <person name="Taubman M.B."/>
        </authorList>
    </citation>
    <scope>NUCLEOTIDE SEQUENCE [MRNA]</scope>
    <scope>TISSUE SPECIFICITY</scope>
    <scope>INDUCTION</scope>
    <source>
        <strain>Sprague-Dawley</strain>
        <tissue>Aortic smooth muscle</tissue>
    </source>
</reference>
<reference key="2">
    <citation type="journal article" date="1999" name="J. Neurochem.">
        <title>Expression of the SM-20 gene promotes death in nerve growth factor-dependent sympathetic neurons.</title>
        <authorList>
            <person name="Lipscomb E.A."/>
            <person name="Sarmiere P.D."/>
            <person name="Crowder R.J."/>
            <person name="Freeman R.S."/>
        </authorList>
    </citation>
    <scope>FUNCTION</scope>
    <scope>INDUCTION</scope>
</reference>
<reference key="3">
    <citation type="journal article" date="2001" name="Cell">
        <title>C. elegans EGL-9 and mammalian homologs define a family of dioxygenases that regulate HIF by prolyl hydroxylation.</title>
        <authorList>
            <person name="Epstein A.C.R."/>
            <person name="Gleadle J.M."/>
            <person name="McNeill L.A."/>
            <person name="Hewitson K.S."/>
            <person name="O'Rourke J."/>
            <person name="Mole D.R."/>
            <person name="Mukherji M."/>
            <person name="Metzen E."/>
            <person name="Wilson M.I."/>
            <person name="Dhanda A."/>
            <person name="Tian Y.M."/>
            <person name="Masson N."/>
            <person name="Hamilton D.L."/>
            <person name="Jaakkola P."/>
            <person name="Barstead R."/>
            <person name="Hodgkin J."/>
            <person name="Maxwell P.H."/>
            <person name="Pugh C.W."/>
            <person name="Schofield C.J."/>
            <person name="Ratcliffe P.J."/>
        </authorList>
    </citation>
    <scope>FUNCTION</scope>
</reference>
<reference key="4">
    <citation type="journal article" date="2001" name="J. Biol. Chem.">
        <title>SM-20 is a novel mitochondrial protein that causes caspase-dependent cell death in nerve growth factor-dependent neurons.</title>
        <authorList>
            <person name="Lipscomb E.A."/>
            <person name="Sarmiere P.D."/>
            <person name="Freeman R.S."/>
        </authorList>
    </citation>
    <scope>FUNCTION</scope>
</reference>
<reference key="5">
    <citation type="journal article" date="2004" name="Biochem. Biophys. Res. Commun.">
        <title>Regulation of the SM-20 prolyl hydroxylase gene in smooth muscle cells.</title>
        <authorList>
            <person name="Menzies K."/>
            <person name="Liu B."/>
            <person name="Kim W.J."/>
            <person name="Moschella M.C."/>
            <person name="Taubman M.B."/>
        </authorList>
    </citation>
    <scope>IDENTIFICATION OF INITIATION SITE</scope>
    <scope>INDUCTION</scope>
    <scope>TISSUE SPECIFICITY</scope>
</reference>
<reference key="6">
    <citation type="journal article" date="2006" name="J. Biol. Chem.">
        <title>The novel WD-repeat protein Morg1 acts as a molecular scaffold for hypoxia-inducible factor prolyl hydroxylase 3 (PHD3).</title>
        <authorList>
            <person name="Hopfer U."/>
            <person name="Hopfer H."/>
            <person name="Jablonski K."/>
            <person name="Stahl R.A.K."/>
            <person name="Wolf G."/>
        </authorList>
    </citation>
    <scope>INTERACTION WITH WDR83</scope>
    <scope>SUBCELLULAR LOCATION</scope>
    <scope>TISSUE SPECIFICITY</scope>
</reference>
<reference key="7">
    <citation type="journal article" date="2006" name="J. Mol. Cell. Cardiol.">
        <title>HIF prolyl hydroxylases in the rat; organ distribution and changes in expression following hypoxia and coronary artery ligation.</title>
        <authorList>
            <person name="Willam C."/>
            <person name="Maxwell P.H."/>
            <person name="Nichols L."/>
            <person name="Lygate C."/>
            <person name="Tian Y.M."/>
            <person name="Bernhardt W."/>
            <person name="Wiesener M."/>
            <person name="Ratcliffe P.J."/>
            <person name="Eckardt K.U."/>
            <person name="Pugh C.W."/>
        </authorList>
    </citation>
    <scope>TISSUE SPECIFICITY</scope>
    <scope>SUBCELLULAR LOCATION</scope>
    <scope>INDUCTION</scope>
</reference>
<reference key="8">
    <citation type="journal article" date="2010" name="Biochem. Biophys. Res. Commun.">
        <title>Prolyl hydroxylase 3 interacts with Bcl-2 to regulate doxorubicin-induced apoptosis in H9c2 cells.</title>
        <authorList>
            <person name="Liu Y."/>
            <person name="Huo Z."/>
            <person name="Yan B."/>
            <person name="Lin X."/>
            <person name="Zhou Z.N."/>
            <person name="Liang X."/>
            <person name="Zhu W."/>
            <person name="Liang D."/>
            <person name="Li L."/>
            <person name="Liu Y."/>
            <person name="Zhao H."/>
            <person name="Sun Y."/>
            <person name="Chen Y.H."/>
        </authorList>
    </citation>
    <scope>INTERACTION WITH BCL2</scope>
    <scope>FUNCTION</scope>
</reference>
<gene>
    <name type="primary">Egln3</name>
    <name evidence="14 15" type="synonym">Sm20</name>
</gene>
<proteinExistence type="evidence at protein level"/>
<keyword id="KW-0053">Apoptosis</keyword>
<keyword id="KW-0963">Cytoplasm</keyword>
<keyword id="KW-0223">Dioxygenase</keyword>
<keyword id="KW-0227">DNA damage</keyword>
<keyword id="KW-0408">Iron</keyword>
<keyword id="KW-0479">Metal-binding</keyword>
<keyword id="KW-0539">Nucleus</keyword>
<keyword id="KW-0560">Oxidoreductase</keyword>
<keyword id="KW-1185">Reference proteome</keyword>
<keyword id="KW-0832">Ubl conjugation</keyword>
<keyword id="KW-0847">Vitamin C</keyword>
<protein>
    <recommendedName>
        <fullName evidence="16">Prolyl hydroxylase EGLN3</fullName>
        <ecNumber evidence="4">1.14.11.-</ecNumber>
    </recommendedName>
    <alternativeName>
        <fullName>Egl nine homolog 3</fullName>
        <ecNumber evidence="4">1.14.11.29</ecNumber>
    </alternativeName>
    <alternativeName>
        <fullName>Hypoxia-inducible factor prolyl hydroxylase 3</fullName>
        <shortName>HIF-PH3</shortName>
        <shortName>HIF-prolyl hydroxylase 3</shortName>
        <shortName>HPH-3</shortName>
    </alternativeName>
    <alternativeName>
        <fullName>Prolyl hydroxylase domain-containing protein 3</fullName>
        <shortName>PHD3</shortName>
    </alternativeName>
    <alternativeName>
        <fullName evidence="14 15">SM-20</fullName>
    </alternativeName>
</protein>
<organism>
    <name type="scientific">Rattus norvegicus</name>
    <name type="common">Rat</name>
    <dbReference type="NCBI Taxonomy" id="10116"/>
    <lineage>
        <taxon>Eukaryota</taxon>
        <taxon>Metazoa</taxon>
        <taxon>Chordata</taxon>
        <taxon>Craniata</taxon>
        <taxon>Vertebrata</taxon>
        <taxon>Euteleostomi</taxon>
        <taxon>Mammalia</taxon>
        <taxon>Eutheria</taxon>
        <taxon>Euarchontoglires</taxon>
        <taxon>Glires</taxon>
        <taxon>Rodentia</taxon>
        <taxon>Myomorpha</taxon>
        <taxon>Muroidea</taxon>
        <taxon>Muridae</taxon>
        <taxon>Murinae</taxon>
        <taxon>Rattus</taxon>
    </lineage>
</organism>
<name>EGLN3_RAT</name>
<sequence length="239" mass="27242">MPLGHIMRLDLEKIALEYIVPCLHEVGFCYLDNFLGEVVGDCVLERVKQLHYNGALRDGQLAGPRAGVSKRHLRGDQITWIGGNEEGCEAINFLLSLIDRLVLYCGSRLGKYYVKERSKAMVACYPGNGTGYVRHVDNPNGDGRCITCIYYLNKNWDAKLHGGVLRIFPEGKSFVADVEPIFDRLLFSWSDRRNPHEVQPSYATRYAMTVWYFDAEERAEAKKKFRNLTRKTESALAKD</sequence>
<comment type="function">
    <text evidence="1 4 6 7 8 12">Prolyl hydroxylase that mediates hydroxylation of proline residues in target proteins, such as PKM, TELO2, ATF4 and HIF1A (By similarity). Target proteins are preferentially recognized via a LXXLAP motif (By similarity). Cellular oxygen sensor that catalyzes, under normoxic conditions, the post-translational formation of 4-hydroxyproline in hypoxia-inducible factor (HIF) alpha proteins (PubMed:11595184). Hydroxylates a specific proline found in each of the oxygen-dependent degradation (ODD) domains (N-terminal, NODD, and C-terminal, CODD) of HIF1A (By similarity). Also hydroxylates HIF2A (By similarity). Has a preference for the CODD site for both HIF1A and HIF2A (By similarity). Hydroxylation on the NODD site by EGLN3 appears to require prior hydroxylation on the CODD site (By similarity). Hydroxylated HIFs are then targeted for proteasomal degradation via the von Hippel-Lindau ubiquitination complex (By similarity). Under hypoxic conditions, the hydroxylation reaction is attenuated allowing HIFs to escape degradation resulting in their translocation to the nucleus, heterodimerization with HIF1B, and increased expression of hypoxy-inducible genes (By similarity). ELGN3 is the most important isozyme in limiting physiological activation of HIFs (particularly HIF2A) in hypoxia (By similarity). Also hydroxylates PKM in hypoxia, limiting glycolysis (By similarity). Under normoxia, hydroxylates and regulates the stability of ADRB2 (By similarity). Regulator of cardiomyocyte and neuronal apoptosis (By similarity). In cardiomyocytes, inhibits the anti-apoptotic effect of BCL2 by disrupting the BAX-BCL2 complex (PubMed:20849813). In neurons, has a NGF-induced proapoptotic effect, probably through regulating CASP3 activity (PubMed:10386996, PubMed:11060309). Also essential for hypoxic regulation of neutrophilic inflammation (By similarity). Plays a crucial role in DNA damage response (DDR) by hydroxylating TELO2, promoting its interaction with ATR which is required for activation of the ATR/CHK1/p53 pathway (By similarity). Also mediates hydroxylation of ATF4, leading to decreased protein stability of ATF4 (By similarity).</text>
</comment>
<comment type="catalytic activity">
    <reaction evidence="4">
        <text>L-prolyl-[protein] + 2-oxoglutarate + O2 = trans-4-hydroxy-L-prolyl-[protein] + succinate + CO2</text>
        <dbReference type="Rhea" id="RHEA:63484"/>
        <dbReference type="Rhea" id="RHEA-COMP:12408"/>
        <dbReference type="Rhea" id="RHEA-COMP:16354"/>
        <dbReference type="ChEBI" id="CHEBI:15379"/>
        <dbReference type="ChEBI" id="CHEBI:16526"/>
        <dbReference type="ChEBI" id="CHEBI:16810"/>
        <dbReference type="ChEBI" id="CHEBI:30031"/>
        <dbReference type="ChEBI" id="CHEBI:50342"/>
        <dbReference type="ChEBI" id="CHEBI:61965"/>
    </reaction>
    <physiologicalReaction direction="left-to-right" evidence="4">
        <dbReference type="Rhea" id="RHEA:63485"/>
    </physiologicalReaction>
</comment>
<comment type="catalytic activity">
    <reaction evidence="4">
        <text>L-prolyl-[hypoxia-inducible factor alpha subunit] + 2-oxoglutarate + O2 = trans-4-hydroxy-L-prolyl-[hypoxia-inducible factor alpha subunit] + succinate + CO2</text>
        <dbReference type="Rhea" id="RHEA:48400"/>
        <dbReference type="Rhea" id="RHEA-COMP:12093"/>
        <dbReference type="Rhea" id="RHEA-COMP:12094"/>
        <dbReference type="ChEBI" id="CHEBI:15379"/>
        <dbReference type="ChEBI" id="CHEBI:16526"/>
        <dbReference type="ChEBI" id="CHEBI:16810"/>
        <dbReference type="ChEBI" id="CHEBI:30031"/>
        <dbReference type="ChEBI" id="CHEBI:50342"/>
        <dbReference type="ChEBI" id="CHEBI:61965"/>
        <dbReference type="EC" id="1.14.11.29"/>
    </reaction>
</comment>
<comment type="cofactor">
    <cofactor evidence="5">
        <name>Fe(2+)</name>
        <dbReference type="ChEBI" id="CHEBI:29033"/>
    </cofactor>
    <text evidence="5">Binds 1 Fe(2+) ion per subunit.</text>
</comment>
<comment type="cofactor">
    <cofactor evidence="2">
        <name>L-ascorbate</name>
        <dbReference type="ChEBI" id="CHEBI:38290"/>
    </cofactor>
</comment>
<comment type="subunit">
    <text evidence="4 10">Interacts with ADRB2; the interaction hydroxylates ADRB2 facilitating its ubiquitination by the VHL-E3 ligase complex (By similarity). Interacts with PAX2; the interaction targets PAX2 for destruction (By similarity). Interacts with PKM; the interaction hydroxylates PKM in hypoxia (By similarity). Interacts with WDR83; the interaction leads to almost complete elimination of HIF-mediated reporter activity (PubMed:16407229). Interacts with BCL2 (via its BH4 domain); the interaction disrupts the BAX-BCL4 complex inhibiting the anti-apoptotic activity of BCL2 (By similarity).</text>
</comment>
<comment type="subcellular location">
    <subcellularLocation>
        <location evidence="4">Nucleus</location>
    </subcellularLocation>
    <subcellularLocation>
        <location evidence="10">Cytoplasm</location>
    </subcellularLocation>
    <text evidence="10">Colocalizes with WDR83 in the cytoplasm.</text>
</comment>
<comment type="tissue specificity">
    <text evidence="9 10 11 13">Highly expressed in vascular smooth muscle. Moderately expressed in esophagus, stomach, small bowel and aorta. Low levels in tail and kidney. Expression also in pheochromocytoma cell line PC-12.</text>
</comment>
<comment type="induction">
    <text evidence="6 9 11 13">By PDGF and angiotensin II in aortic smooth muscle cells. By deprivation of NGF in neuronal cell cultures. Induced during coronary heart ligation.</text>
</comment>
<comment type="domain">
    <text evidence="3">The Beta(2)beta(3) 'finger-like' loop domain is important for substrate (HIFs' CODD/NODD) selectivity.</text>
</comment>
<comment type="PTM">
    <text evidence="1">Ubiquitinated by SIAH1 and/or SIAH2 in response to the unfolded protein response (UPR), leading to its degradation.</text>
</comment>
<comment type="sequence caution" evidence="16">
    <conflict type="erroneous initiation">
        <sequence resource="EMBL-CDS" id="AAA19321"/>
    </conflict>
    <text>Extended N-terminus.</text>
</comment>
<accession>Q62630</accession>
<feature type="chain" id="PRO_0000022730" description="Prolyl hydroxylase EGLN3">
    <location>
        <begin position="1"/>
        <end position="239"/>
    </location>
</feature>
<feature type="domain" description="Fe2OG dioxygenase" evidence="5">
    <location>
        <begin position="116"/>
        <end position="214"/>
    </location>
</feature>
<feature type="region of interest" description="Beta(2)beta(3) 'finger-like' loop" evidence="3">
    <location>
        <begin position="62"/>
        <end position="73"/>
    </location>
</feature>
<feature type="region of interest" description="Required for interaction with ADRB2" evidence="4">
    <location>
        <begin position="88"/>
        <end position="104"/>
    </location>
</feature>
<feature type="binding site" evidence="5">
    <location>
        <position position="135"/>
    </location>
    <ligand>
        <name>Fe cation</name>
        <dbReference type="ChEBI" id="CHEBI:24875"/>
    </ligand>
</feature>
<feature type="binding site" evidence="5">
    <location>
        <position position="137"/>
    </location>
    <ligand>
        <name>Fe cation</name>
        <dbReference type="ChEBI" id="CHEBI:24875"/>
    </ligand>
</feature>
<feature type="binding site" evidence="5">
    <location>
        <position position="196"/>
    </location>
    <ligand>
        <name>Fe cation</name>
        <dbReference type="ChEBI" id="CHEBI:24875"/>
    </ligand>
</feature>
<feature type="binding site" evidence="5">
    <location>
        <position position="205"/>
    </location>
    <ligand>
        <name>2-oxoglutarate</name>
        <dbReference type="ChEBI" id="CHEBI:16810"/>
    </ligand>
</feature>
<dbReference type="EC" id="1.14.11.-" evidence="4"/>
<dbReference type="EC" id="1.14.11.29" evidence="4"/>
<dbReference type="EMBL" id="U06713">
    <property type="protein sequence ID" value="AAA19321.1"/>
    <property type="status" value="ALT_INIT"/>
    <property type="molecule type" value="mRNA"/>
</dbReference>
<dbReference type="PIR" id="A53770">
    <property type="entry name" value="A53770"/>
</dbReference>
<dbReference type="RefSeq" id="NP_062244.1">
    <property type="nucleotide sequence ID" value="NM_019371.1"/>
</dbReference>
<dbReference type="SMR" id="Q62630"/>
<dbReference type="BioGRID" id="248549">
    <property type="interactions" value="1"/>
</dbReference>
<dbReference type="FunCoup" id="Q62630">
    <property type="interactions" value="191"/>
</dbReference>
<dbReference type="STRING" id="10116.ENSRNOP00000007219"/>
<dbReference type="PhosphoSitePlus" id="Q62630"/>
<dbReference type="PaxDb" id="10116-ENSRNOP00000007219"/>
<dbReference type="GeneID" id="54702"/>
<dbReference type="KEGG" id="rno:54702"/>
<dbReference type="UCSC" id="RGD:71019">
    <property type="organism name" value="rat"/>
</dbReference>
<dbReference type="AGR" id="RGD:71019"/>
<dbReference type="CTD" id="112399"/>
<dbReference type="RGD" id="71019">
    <property type="gene designation" value="Egln3"/>
</dbReference>
<dbReference type="eggNOG" id="KOG3710">
    <property type="taxonomic scope" value="Eukaryota"/>
</dbReference>
<dbReference type="InParanoid" id="Q62630"/>
<dbReference type="Reactome" id="R-RNO-1234176">
    <property type="pathway name" value="Oxygen-dependent proline hydroxylation of Hypoxia-inducible Factor Alpha"/>
</dbReference>
<dbReference type="PRO" id="PR:Q62630"/>
<dbReference type="Proteomes" id="UP000002494">
    <property type="component" value="Unplaced"/>
</dbReference>
<dbReference type="GO" id="GO:0005737">
    <property type="term" value="C:cytoplasm"/>
    <property type="evidence" value="ECO:0000250"/>
    <property type="project" value="UniProtKB"/>
</dbReference>
<dbReference type="GO" id="GO:0005634">
    <property type="term" value="C:nucleus"/>
    <property type="evidence" value="ECO:0000250"/>
    <property type="project" value="UniProtKB"/>
</dbReference>
<dbReference type="GO" id="GO:0016706">
    <property type="term" value="F:2-oxoglutarate-dependent dioxygenase activity"/>
    <property type="evidence" value="ECO:0000266"/>
    <property type="project" value="RGD"/>
</dbReference>
<dbReference type="GO" id="GO:0008198">
    <property type="term" value="F:ferrous iron binding"/>
    <property type="evidence" value="ECO:0000318"/>
    <property type="project" value="GO_Central"/>
</dbReference>
<dbReference type="GO" id="GO:0160082">
    <property type="term" value="F:hypoxia-inducible factor-proline dioxygenase activity"/>
    <property type="evidence" value="ECO:0007669"/>
    <property type="project" value="UniProtKB-EC"/>
</dbReference>
<dbReference type="GO" id="GO:0031418">
    <property type="term" value="F:L-ascorbic acid binding"/>
    <property type="evidence" value="ECO:0007669"/>
    <property type="project" value="UniProtKB-KW"/>
</dbReference>
<dbReference type="GO" id="GO:0031545">
    <property type="term" value="F:peptidyl-proline 4-dioxygenase activity"/>
    <property type="evidence" value="ECO:0000266"/>
    <property type="project" value="RGD"/>
</dbReference>
<dbReference type="GO" id="GO:0031543">
    <property type="term" value="F:peptidyl-proline dioxygenase activity"/>
    <property type="evidence" value="ECO:0000266"/>
    <property type="project" value="RGD"/>
</dbReference>
<dbReference type="GO" id="GO:0006915">
    <property type="term" value="P:apoptotic process"/>
    <property type="evidence" value="ECO:0007669"/>
    <property type="project" value="UniProtKB-KW"/>
</dbReference>
<dbReference type="GO" id="GO:0071456">
    <property type="term" value="P:cellular response to hypoxia"/>
    <property type="evidence" value="ECO:0000318"/>
    <property type="project" value="GO_Central"/>
</dbReference>
<dbReference type="GO" id="GO:1990830">
    <property type="term" value="P:cellular response to leukemia inhibitory factor"/>
    <property type="evidence" value="ECO:0000266"/>
    <property type="project" value="RGD"/>
</dbReference>
<dbReference type="GO" id="GO:0006974">
    <property type="term" value="P:DNA damage response"/>
    <property type="evidence" value="ECO:0007669"/>
    <property type="project" value="UniProtKB-KW"/>
</dbReference>
<dbReference type="GO" id="GO:0042127">
    <property type="term" value="P:regulation of cell population proliferation"/>
    <property type="evidence" value="ECO:0000315"/>
    <property type="project" value="RGD"/>
</dbReference>
<dbReference type="GO" id="GO:0043523">
    <property type="term" value="P:regulation of neuron apoptotic process"/>
    <property type="evidence" value="ECO:0000250"/>
    <property type="project" value="UniProtKB"/>
</dbReference>
<dbReference type="FunFam" id="2.60.120.620:FF:000005">
    <property type="entry name" value="Egl nine homolog 1"/>
    <property type="match status" value="1"/>
</dbReference>
<dbReference type="Gene3D" id="2.60.120.620">
    <property type="entry name" value="q2cbj1_9rhob like domain"/>
    <property type="match status" value="1"/>
</dbReference>
<dbReference type="InterPro" id="IPR051559">
    <property type="entry name" value="HIF_prolyl_hydroxylases"/>
</dbReference>
<dbReference type="InterPro" id="IPR005123">
    <property type="entry name" value="Oxoglu/Fe-dep_dioxygenase_dom"/>
</dbReference>
<dbReference type="InterPro" id="IPR006620">
    <property type="entry name" value="Pro_4_hyd_alph"/>
</dbReference>
<dbReference type="InterPro" id="IPR044862">
    <property type="entry name" value="Pro_4_hyd_alph_FE2OG_OXY"/>
</dbReference>
<dbReference type="PANTHER" id="PTHR12907">
    <property type="entry name" value="EGL NINE HOMOLOG-RELATED"/>
    <property type="match status" value="1"/>
</dbReference>
<dbReference type="PANTHER" id="PTHR12907:SF28">
    <property type="entry name" value="PROLYL HYDROXYLASE EGLN3"/>
    <property type="match status" value="1"/>
</dbReference>
<dbReference type="Pfam" id="PF13640">
    <property type="entry name" value="2OG-FeII_Oxy_3"/>
    <property type="match status" value="1"/>
</dbReference>
<dbReference type="SMART" id="SM00702">
    <property type="entry name" value="P4Hc"/>
    <property type="match status" value="1"/>
</dbReference>
<dbReference type="PROSITE" id="PS51471">
    <property type="entry name" value="FE2OG_OXY"/>
    <property type="match status" value="1"/>
</dbReference>
<evidence type="ECO:0000250" key="1">
    <source>
        <dbReference type="UniProtKB" id="Q91UZ4"/>
    </source>
</evidence>
<evidence type="ECO:0000250" key="2">
    <source>
        <dbReference type="UniProtKB" id="Q96KS0"/>
    </source>
</evidence>
<evidence type="ECO:0000250" key="3">
    <source>
        <dbReference type="UniProtKB" id="Q9GZT9"/>
    </source>
</evidence>
<evidence type="ECO:0000250" key="4">
    <source>
        <dbReference type="UniProtKB" id="Q9H6Z9"/>
    </source>
</evidence>
<evidence type="ECO:0000255" key="5">
    <source>
        <dbReference type="PROSITE-ProRule" id="PRU00805"/>
    </source>
</evidence>
<evidence type="ECO:0000269" key="6">
    <source>
    </source>
</evidence>
<evidence type="ECO:0000269" key="7">
    <source>
    </source>
</evidence>
<evidence type="ECO:0000269" key="8">
    <source>
    </source>
</evidence>
<evidence type="ECO:0000269" key="9">
    <source>
    </source>
</evidence>
<evidence type="ECO:0000269" key="10">
    <source>
    </source>
</evidence>
<evidence type="ECO:0000269" key="11">
    <source>
    </source>
</evidence>
<evidence type="ECO:0000269" key="12">
    <source>
    </source>
</evidence>
<evidence type="ECO:0000269" key="13">
    <source>
    </source>
</evidence>
<evidence type="ECO:0000303" key="14">
    <source>
    </source>
</evidence>
<evidence type="ECO:0000303" key="15">
    <source>
    </source>
</evidence>
<evidence type="ECO:0000305" key="16"/>